<reference key="1">
    <citation type="journal article" date="2007" name="Nat. Biotechnol.">
        <title>Comparative analysis of the complete genome sequence of the plant growth-promoting bacterium Bacillus amyloliquefaciens FZB42.</title>
        <authorList>
            <person name="Chen X.H."/>
            <person name="Koumoutsi A."/>
            <person name="Scholz R."/>
            <person name="Eisenreich A."/>
            <person name="Schneider K."/>
            <person name="Heinemeyer I."/>
            <person name="Morgenstern B."/>
            <person name="Voss B."/>
            <person name="Hess W.R."/>
            <person name="Reva O."/>
            <person name="Junge H."/>
            <person name="Voigt B."/>
            <person name="Jungblut P.R."/>
            <person name="Vater J."/>
            <person name="Suessmuth R."/>
            <person name="Liesegang H."/>
            <person name="Strittmatter A."/>
            <person name="Gottschalk G."/>
            <person name="Borriss R."/>
        </authorList>
    </citation>
    <scope>NUCLEOTIDE SEQUENCE [LARGE SCALE GENOMIC DNA]</scope>
    <source>
        <strain>DSM 23117 / BGSC 10A6 / LMG 26770 / FZB42</strain>
    </source>
</reference>
<sequence>MENILDLWNQALAQIEKKLSKPSFETWMKSTKAHSLQGDTLTITAPNEFARDWLESRYLHLIADTIYELTGEELSVKFVIPQNQDEENFLPKPQVKKAAKEEPSDFPQSMLNPKYTFDTFVIGSGNRFAHAASLAVAEAPAKAYNPLFIYGGVGLGKTHLMHAIGHYVIDHNPSAKVVYLSSEKFTNEFINSIRDNKAVDFRNRYRNVDVLLIDDIQFLAGKEQTQEEFFHTFNTLHEESKQIVISSDRPPKEIPTLEDRLRSRFEWGLITDITPPDLETRIAILRKKAKAEGLDIPNEVMLYIANQIDSNIRELEGALIRVVAYSSLINKDINADLAAEALKDIIPSSKPKVITIKEIQRIVGQQFNIKLEDFKAKKRTKSVAFPRQIAMYLSREMTDSSLPKIGEEFGGRDHTTVIHAHEKISKLLIDDEQLQQQVKEIKELLK</sequence>
<accession>A7Z0C3</accession>
<feature type="chain" id="PRO_1000048606" description="Chromosomal replication initiator protein DnaA">
    <location>
        <begin position="1"/>
        <end position="446"/>
    </location>
</feature>
<feature type="region of interest" description="Domain I, interacts with DnaA modulators" evidence="1">
    <location>
        <begin position="1"/>
        <end position="72"/>
    </location>
</feature>
<feature type="region of interest" description="Domain II" evidence="1">
    <location>
        <begin position="72"/>
        <end position="109"/>
    </location>
</feature>
<feature type="region of interest" description="Domain III, AAA+ region" evidence="1">
    <location>
        <begin position="110"/>
        <end position="326"/>
    </location>
</feature>
<feature type="region of interest" description="Domain IV, binds dsDNA" evidence="1">
    <location>
        <begin position="327"/>
        <end position="446"/>
    </location>
</feature>
<feature type="binding site" evidence="1">
    <location>
        <position position="154"/>
    </location>
    <ligand>
        <name>ATP</name>
        <dbReference type="ChEBI" id="CHEBI:30616"/>
    </ligand>
</feature>
<feature type="binding site" evidence="1">
    <location>
        <position position="156"/>
    </location>
    <ligand>
        <name>ATP</name>
        <dbReference type="ChEBI" id="CHEBI:30616"/>
    </ligand>
</feature>
<feature type="binding site" evidence="1">
    <location>
        <position position="157"/>
    </location>
    <ligand>
        <name>ATP</name>
        <dbReference type="ChEBI" id="CHEBI:30616"/>
    </ligand>
</feature>
<feature type="binding site" evidence="1">
    <location>
        <position position="158"/>
    </location>
    <ligand>
        <name>ATP</name>
        <dbReference type="ChEBI" id="CHEBI:30616"/>
    </ligand>
</feature>
<protein>
    <recommendedName>
        <fullName evidence="1">Chromosomal replication initiator protein DnaA</fullName>
    </recommendedName>
</protein>
<proteinExistence type="inferred from homology"/>
<name>DNAA_BACVZ</name>
<gene>
    <name evidence="1" type="primary">dnaA</name>
    <name type="ordered locus">RBAM_000010</name>
</gene>
<keyword id="KW-0067">ATP-binding</keyword>
<keyword id="KW-0963">Cytoplasm</keyword>
<keyword id="KW-0235">DNA replication</keyword>
<keyword id="KW-0238">DNA-binding</keyword>
<keyword id="KW-0446">Lipid-binding</keyword>
<keyword id="KW-0547">Nucleotide-binding</keyword>
<comment type="function">
    <text evidence="1">Plays an essential role in the initiation and regulation of chromosomal replication. ATP-DnaA binds to the origin of replication (oriC) to initiate formation of the DNA replication initiation complex once per cell cycle. Binds the DnaA box (a 9 base pair repeat at the origin) and separates the double-stranded (ds)DNA. Forms a right-handed helical filament on oriC DNA; dsDNA binds to the exterior of the filament while single-stranded (ss)DNA is stabiized in the filament's interior. The ATP-DnaA-oriC complex binds and stabilizes one strand of the AT-rich DNA unwinding element (DUE), permitting loading of DNA polymerase. After initiation quickly degrades to an ADP-DnaA complex that is not apt for DNA replication. Binds acidic phospholipids.</text>
</comment>
<comment type="subunit">
    <text evidence="1">Oligomerizes as a right-handed, spiral filament on DNA at oriC.</text>
</comment>
<comment type="subcellular location">
    <subcellularLocation>
        <location evidence="1">Cytoplasm</location>
    </subcellularLocation>
</comment>
<comment type="domain">
    <text evidence="1">Domain I is involved in oligomerization and binding regulators, domain II is flexibile and of varying length in different bacteria, domain III forms the AAA+ region, while domain IV binds dsDNA.</text>
</comment>
<comment type="similarity">
    <text evidence="1">Belongs to the DnaA family.</text>
</comment>
<organism>
    <name type="scientific">Bacillus velezensis (strain DSM 23117 / BGSC 10A6 / LMG 26770 / FZB42)</name>
    <name type="common">Bacillus amyloliquefaciens subsp. plantarum</name>
    <dbReference type="NCBI Taxonomy" id="326423"/>
    <lineage>
        <taxon>Bacteria</taxon>
        <taxon>Bacillati</taxon>
        <taxon>Bacillota</taxon>
        <taxon>Bacilli</taxon>
        <taxon>Bacillales</taxon>
        <taxon>Bacillaceae</taxon>
        <taxon>Bacillus</taxon>
        <taxon>Bacillus amyloliquefaciens group</taxon>
    </lineage>
</organism>
<dbReference type="EMBL" id="CP000560">
    <property type="protein sequence ID" value="ABS72449.1"/>
    <property type="molecule type" value="Genomic_DNA"/>
</dbReference>
<dbReference type="RefSeq" id="WP_007409908.1">
    <property type="nucleotide sequence ID" value="NC_009725.2"/>
</dbReference>
<dbReference type="SMR" id="A7Z0C3"/>
<dbReference type="GeneID" id="93079139"/>
<dbReference type="KEGG" id="bay:RBAM_000010"/>
<dbReference type="HOGENOM" id="CLU_026910_3_1_9"/>
<dbReference type="Proteomes" id="UP000001120">
    <property type="component" value="Chromosome"/>
</dbReference>
<dbReference type="GO" id="GO:0005737">
    <property type="term" value="C:cytoplasm"/>
    <property type="evidence" value="ECO:0007669"/>
    <property type="project" value="UniProtKB-SubCell"/>
</dbReference>
<dbReference type="GO" id="GO:0005886">
    <property type="term" value="C:plasma membrane"/>
    <property type="evidence" value="ECO:0007669"/>
    <property type="project" value="TreeGrafter"/>
</dbReference>
<dbReference type="GO" id="GO:0005524">
    <property type="term" value="F:ATP binding"/>
    <property type="evidence" value="ECO:0007669"/>
    <property type="project" value="UniProtKB-UniRule"/>
</dbReference>
<dbReference type="GO" id="GO:0016887">
    <property type="term" value="F:ATP hydrolysis activity"/>
    <property type="evidence" value="ECO:0007669"/>
    <property type="project" value="InterPro"/>
</dbReference>
<dbReference type="GO" id="GO:0003688">
    <property type="term" value="F:DNA replication origin binding"/>
    <property type="evidence" value="ECO:0007669"/>
    <property type="project" value="UniProtKB-UniRule"/>
</dbReference>
<dbReference type="GO" id="GO:0008289">
    <property type="term" value="F:lipid binding"/>
    <property type="evidence" value="ECO:0007669"/>
    <property type="project" value="UniProtKB-KW"/>
</dbReference>
<dbReference type="GO" id="GO:0006270">
    <property type="term" value="P:DNA replication initiation"/>
    <property type="evidence" value="ECO:0007669"/>
    <property type="project" value="UniProtKB-UniRule"/>
</dbReference>
<dbReference type="GO" id="GO:0006275">
    <property type="term" value="P:regulation of DNA replication"/>
    <property type="evidence" value="ECO:0007669"/>
    <property type="project" value="UniProtKB-UniRule"/>
</dbReference>
<dbReference type="CDD" id="cd00009">
    <property type="entry name" value="AAA"/>
    <property type="match status" value="1"/>
</dbReference>
<dbReference type="CDD" id="cd06571">
    <property type="entry name" value="Bac_DnaA_C"/>
    <property type="match status" value="1"/>
</dbReference>
<dbReference type="FunFam" id="1.10.1750.10:FF:000003">
    <property type="entry name" value="Chromosomal replication initiator protein DnaA"/>
    <property type="match status" value="1"/>
</dbReference>
<dbReference type="FunFam" id="1.10.8.60:FF:000003">
    <property type="entry name" value="Chromosomal replication initiator protein DnaA"/>
    <property type="match status" value="1"/>
</dbReference>
<dbReference type="FunFam" id="3.30.300.180:FF:000002">
    <property type="entry name" value="Chromosomal replication initiator protein DnaA"/>
    <property type="match status" value="1"/>
</dbReference>
<dbReference type="FunFam" id="3.40.50.300:FF:000150">
    <property type="entry name" value="Chromosomal replication initiator protein DnaA"/>
    <property type="match status" value="1"/>
</dbReference>
<dbReference type="Gene3D" id="1.10.1750.10">
    <property type="match status" value="1"/>
</dbReference>
<dbReference type="Gene3D" id="1.10.8.60">
    <property type="match status" value="1"/>
</dbReference>
<dbReference type="Gene3D" id="3.30.300.180">
    <property type="match status" value="1"/>
</dbReference>
<dbReference type="Gene3D" id="3.40.50.300">
    <property type="entry name" value="P-loop containing nucleotide triphosphate hydrolases"/>
    <property type="match status" value="1"/>
</dbReference>
<dbReference type="HAMAP" id="MF_00377">
    <property type="entry name" value="DnaA_bact"/>
    <property type="match status" value="1"/>
</dbReference>
<dbReference type="InterPro" id="IPR003593">
    <property type="entry name" value="AAA+_ATPase"/>
</dbReference>
<dbReference type="InterPro" id="IPR001957">
    <property type="entry name" value="Chromosome_initiator_DnaA"/>
</dbReference>
<dbReference type="InterPro" id="IPR020591">
    <property type="entry name" value="Chromosome_initiator_DnaA-like"/>
</dbReference>
<dbReference type="InterPro" id="IPR018312">
    <property type="entry name" value="Chromosome_initiator_DnaA_CS"/>
</dbReference>
<dbReference type="InterPro" id="IPR013159">
    <property type="entry name" value="DnaA_C"/>
</dbReference>
<dbReference type="InterPro" id="IPR013317">
    <property type="entry name" value="DnaA_dom"/>
</dbReference>
<dbReference type="InterPro" id="IPR024633">
    <property type="entry name" value="DnaA_N_dom"/>
</dbReference>
<dbReference type="InterPro" id="IPR038454">
    <property type="entry name" value="DnaA_N_sf"/>
</dbReference>
<dbReference type="InterPro" id="IPR027417">
    <property type="entry name" value="P-loop_NTPase"/>
</dbReference>
<dbReference type="InterPro" id="IPR010921">
    <property type="entry name" value="Trp_repressor/repl_initiator"/>
</dbReference>
<dbReference type="NCBIfam" id="TIGR00362">
    <property type="entry name" value="DnaA"/>
    <property type="match status" value="1"/>
</dbReference>
<dbReference type="NCBIfam" id="NF010686">
    <property type="entry name" value="PRK14086.1"/>
    <property type="match status" value="1"/>
</dbReference>
<dbReference type="PANTHER" id="PTHR30050">
    <property type="entry name" value="CHROMOSOMAL REPLICATION INITIATOR PROTEIN DNAA"/>
    <property type="match status" value="1"/>
</dbReference>
<dbReference type="PANTHER" id="PTHR30050:SF2">
    <property type="entry name" value="CHROMOSOMAL REPLICATION INITIATOR PROTEIN DNAA"/>
    <property type="match status" value="1"/>
</dbReference>
<dbReference type="Pfam" id="PF00308">
    <property type="entry name" value="Bac_DnaA"/>
    <property type="match status" value="1"/>
</dbReference>
<dbReference type="Pfam" id="PF08299">
    <property type="entry name" value="Bac_DnaA_C"/>
    <property type="match status" value="1"/>
</dbReference>
<dbReference type="Pfam" id="PF11638">
    <property type="entry name" value="DnaA_N"/>
    <property type="match status" value="1"/>
</dbReference>
<dbReference type="PRINTS" id="PR00051">
    <property type="entry name" value="DNAA"/>
</dbReference>
<dbReference type="SMART" id="SM00382">
    <property type="entry name" value="AAA"/>
    <property type="match status" value="1"/>
</dbReference>
<dbReference type="SMART" id="SM00760">
    <property type="entry name" value="Bac_DnaA_C"/>
    <property type="match status" value="1"/>
</dbReference>
<dbReference type="SUPFAM" id="SSF52540">
    <property type="entry name" value="P-loop containing nucleoside triphosphate hydrolases"/>
    <property type="match status" value="1"/>
</dbReference>
<dbReference type="SUPFAM" id="SSF48295">
    <property type="entry name" value="TrpR-like"/>
    <property type="match status" value="1"/>
</dbReference>
<dbReference type="PROSITE" id="PS01008">
    <property type="entry name" value="DNAA"/>
    <property type="match status" value="1"/>
</dbReference>
<evidence type="ECO:0000255" key="1">
    <source>
        <dbReference type="HAMAP-Rule" id="MF_00377"/>
    </source>
</evidence>